<sequence>MDFLRIEGGKTLNGSVPISGAKNAALPLIASTILSKQSVQIDNLPDVQDIKTLLRLLQNLGASYQYEDGLATIDASKLTSTVATYDIVRTMRASILVLGPILAKYGRCEVSLPGGCAIGQRPIDLHLQALEQMGAKITIKAGYVVAEAPNGLKGSTIIFDKITVTGTENIVMAAALAKGTTTIINAAKEPEVVQLCEVLKDAGVQIDGIGSDELIIEGTDREPIEMRAIHVIPDRIEAGTYLCAGAITNSTLSIENVIPHHLDSVLVKLKQMGFPLDVNESNITIHPARTIEPVEIVTSEYPGFPTDMQAQFMALALLANGASIIEERLFENRFMHVSELKRFGANIQLKGNIATVIGPTELWGADVMATDLRASSALVLAGLAAKGTTNVHRIYHLDRGYEKLEEKLNALGANIQRLSE</sequence>
<keyword id="KW-0131">Cell cycle</keyword>
<keyword id="KW-0132">Cell division</keyword>
<keyword id="KW-0133">Cell shape</keyword>
<keyword id="KW-0961">Cell wall biogenesis/degradation</keyword>
<keyword id="KW-0963">Cytoplasm</keyword>
<keyword id="KW-0573">Peptidoglycan synthesis</keyword>
<keyword id="KW-0670">Pyruvate</keyword>
<keyword id="KW-1185">Reference proteome</keyword>
<keyword id="KW-0808">Transferase</keyword>
<protein>
    <recommendedName>
        <fullName evidence="1">UDP-N-acetylglucosamine 1-carboxyvinyltransferase</fullName>
        <ecNumber evidence="1">2.5.1.7</ecNumber>
    </recommendedName>
    <alternativeName>
        <fullName evidence="1">Enoylpyruvate transferase</fullName>
    </alternativeName>
    <alternativeName>
        <fullName evidence="1">UDP-N-acetylglucosamine enolpyruvyl transferase</fullName>
        <shortName evidence="1">EPT</shortName>
    </alternativeName>
</protein>
<reference key="1">
    <citation type="journal article" date="2007" name="Proc. Natl. Acad. Sci. U.S.A.">
        <title>Deep-sea vent epsilon-proteobacterial genomes provide insights into emergence of pathogens.</title>
        <authorList>
            <person name="Nakagawa S."/>
            <person name="Takaki Y."/>
            <person name="Shimamura S."/>
            <person name="Reysenbach A.-L."/>
            <person name="Takai K."/>
            <person name="Horikoshi K."/>
        </authorList>
    </citation>
    <scope>NUCLEOTIDE SEQUENCE [LARGE SCALE GENOMIC DNA]</scope>
    <source>
        <strain>SB155-2</strain>
    </source>
</reference>
<gene>
    <name evidence="1" type="primary">murA</name>
    <name type="ordered locus">NIS_0957</name>
</gene>
<dbReference type="EC" id="2.5.1.7" evidence="1"/>
<dbReference type="EMBL" id="AP009178">
    <property type="protein sequence ID" value="BAF70067.1"/>
    <property type="molecule type" value="Genomic_DNA"/>
</dbReference>
<dbReference type="RefSeq" id="WP_012082330.1">
    <property type="nucleotide sequence ID" value="NC_009662.1"/>
</dbReference>
<dbReference type="SMR" id="A6Q3K8"/>
<dbReference type="FunCoup" id="A6Q3K8">
    <property type="interactions" value="389"/>
</dbReference>
<dbReference type="STRING" id="387092.NIS_0957"/>
<dbReference type="KEGG" id="nis:NIS_0957"/>
<dbReference type="eggNOG" id="COG0766">
    <property type="taxonomic scope" value="Bacteria"/>
</dbReference>
<dbReference type="HOGENOM" id="CLU_027387_0_0_7"/>
<dbReference type="InParanoid" id="A6Q3K8"/>
<dbReference type="OrthoDB" id="9803760at2"/>
<dbReference type="UniPathway" id="UPA00219"/>
<dbReference type="Proteomes" id="UP000001118">
    <property type="component" value="Chromosome"/>
</dbReference>
<dbReference type="GO" id="GO:0005737">
    <property type="term" value="C:cytoplasm"/>
    <property type="evidence" value="ECO:0007669"/>
    <property type="project" value="UniProtKB-SubCell"/>
</dbReference>
<dbReference type="GO" id="GO:0008760">
    <property type="term" value="F:UDP-N-acetylglucosamine 1-carboxyvinyltransferase activity"/>
    <property type="evidence" value="ECO:0007669"/>
    <property type="project" value="UniProtKB-UniRule"/>
</dbReference>
<dbReference type="GO" id="GO:0051301">
    <property type="term" value="P:cell division"/>
    <property type="evidence" value="ECO:0007669"/>
    <property type="project" value="UniProtKB-KW"/>
</dbReference>
<dbReference type="GO" id="GO:0071555">
    <property type="term" value="P:cell wall organization"/>
    <property type="evidence" value="ECO:0007669"/>
    <property type="project" value="UniProtKB-KW"/>
</dbReference>
<dbReference type="GO" id="GO:0009252">
    <property type="term" value="P:peptidoglycan biosynthetic process"/>
    <property type="evidence" value="ECO:0007669"/>
    <property type="project" value="UniProtKB-UniRule"/>
</dbReference>
<dbReference type="GO" id="GO:0008360">
    <property type="term" value="P:regulation of cell shape"/>
    <property type="evidence" value="ECO:0007669"/>
    <property type="project" value="UniProtKB-KW"/>
</dbReference>
<dbReference type="GO" id="GO:0019277">
    <property type="term" value="P:UDP-N-acetylgalactosamine biosynthetic process"/>
    <property type="evidence" value="ECO:0007669"/>
    <property type="project" value="InterPro"/>
</dbReference>
<dbReference type="CDD" id="cd01555">
    <property type="entry name" value="UdpNAET"/>
    <property type="match status" value="1"/>
</dbReference>
<dbReference type="FunFam" id="3.65.10.10:FF:000001">
    <property type="entry name" value="UDP-N-acetylglucosamine 1-carboxyvinyltransferase"/>
    <property type="match status" value="1"/>
</dbReference>
<dbReference type="Gene3D" id="3.65.10.10">
    <property type="entry name" value="Enolpyruvate transferase domain"/>
    <property type="match status" value="2"/>
</dbReference>
<dbReference type="HAMAP" id="MF_00111">
    <property type="entry name" value="MurA"/>
    <property type="match status" value="1"/>
</dbReference>
<dbReference type="InterPro" id="IPR001986">
    <property type="entry name" value="Enolpyruvate_Tfrase_dom"/>
</dbReference>
<dbReference type="InterPro" id="IPR036968">
    <property type="entry name" value="Enolpyruvate_Tfrase_sf"/>
</dbReference>
<dbReference type="InterPro" id="IPR050068">
    <property type="entry name" value="MurA_subfamily"/>
</dbReference>
<dbReference type="InterPro" id="IPR013792">
    <property type="entry name" value="RNA3'P_cycl/enolpyr_Trfase_a/b"/>
</dbReference>
<dbReference type="InterPro" id="IPR005750">
    <property type="entry name" value="UDP_GlcNAc_COvinyl_MurA"/>
</dbReference>
<dbReference type="NCBIfam" id="TIGR01072">
    <property type="entry name" value="murA"/>
    <property type="match status" value="1"/>
</dbReference>
<dbReference type="NCBIfam" id="NF006873">
    <property type="entry name" value="PRK09369.1"/>
    <property type="match status" value="1"/>
</dbReference>
<dbReference type="PANTHER" id="PTHR43783">
    <property type="entry name" value="UDP-N-ACETYLGLUCOSAMINE 1-CARBOXYVINYLTRANSFERASE"/>
    <property type="match status" value="1"/>
</dbReference>
<dbReference type="PANTHER" id="PTHR43783:SF1">
    <property type="entry name" value="UDP-N-ACETYLGLUCOSAMINE 1-CARBOXYVINYLTRANSFERASE"/>
    <property type="match status" value="1"/>
</dbReference>
<dbReference type="Pfam" id="PF00275">
    <property type="entry name" value="EPSP_synthase"/>
    <property type="match status" value="1"/>
</dbReference>
<dbReference type="SUPFAM" id="SSF55205">
    <property type="entry name" value="EPT/RTPC-like"/>
    <property type="match status" value="1"/>
</dbReference>
<organism>
    <name type="scientific">Nitratiruptor sp. (strain SB155-2)</name>
    <dbReference type="NCBI Taxonomy" id="387092"/>
    <lineage>
        <taxon>Bacteria</taxon>
        <taxon>Pseudomonadati</taxon>
        <taxon>Campylobacterota</taxon>
        <taxon>Epsilonproteobacteria</taxon>
        <taxon>Nautiliales</taxon>
        <taxon>Nitratiruptoraceae</taxon>
        <taxon>Nitratiruptor</taxon>
    </lineage>
</organism>
<evidence type="ECO:0000255" key="1">
    <source>
        <dbReference type="HAMAP-Rule" id="MF_00111"/>
    </source>
</evidence>
<proteinExistence type="inferred from homology"/>
<name>MURA_NITSB</name>
<comment type="function">
    <text evidence="1">Cell wall formation. Adds enolpyruvyl to UDP-N-acetylglucosamine.</text>
</comment>
<comment type="catalytic activity">
    <reaction evidence="1">
        <text>phosphoenolpyruvate + UDP-N-acetyl-alpha-D-glucosamine = UDP-N-acetyl-3-O-(1-carboxyvinyl)-alpha-D-glucosamine + phosphate</text>
        <dbReference type="Rhea" id="RHEA:18681"/>
        <dbReference type="ChEBI" id="CHEBI:43474"/>
        <dbReference type="ChEBI" id="CHEBI:57705"/>
        <dbReference type="ChEBI" id="CHEBI:58702"/>
        <dbReference type="ChEBI" id="CHEBI:68483"/>
        <dbReference type="EC" id="2.5.1.7"/>
    </reaction>
</comment>
<comment type="pathway">
    <text evidence="1">Cell wall biogenesis; peptidoglycan biosynthesis.</text>
</comment>
<comment type="subcellular location">
    <subcellularLocation>
        <location evidence="1">Cytoplasm</location>
    </subcellularLocation>
</comment>
<comment type="similarity">
    <text evidence="1">Belongs to the EPSP synthase family. MurA subfamily.</text>
</comment>
<accession>A6Q3K8</accession>
<feature type="chain" id="PRO_1000023061" description="UDP-N-acetylglucosamine 1-carboxyvinyltransferase">
    <location>
        <begin position="1"/>
        <end position="420"/>
    </location>
</feature>
<feature type="active site" description="Proton donor" evidence="1">
    <location>
        <position position="116"/>
    </location>
</feature>
<feature type="binding site" evidence="1">
    <location>
        <begin position="22"/>
        <end position="23"/>
    </location>
    <ligand>
        <name>phosphoenolpyruvate</name>
        <dbReference type="ChEBI" id="CHEBI:58702"/>
    </ligand>
</feature>
<feature type="binding site" evidence="1">
    <location>
        <position position="92"/>
    </location>
    <ligand>
        <name>UDP-N-acetyl-alpha-D-glucosamine</name>
        <dbReference type="ChEBI" id="CHEBI:57705"/>
    </ligand>
</feature>
<feature type="binding site" evidence="1">
    <location>
        <begin position="121"/>
        <end position="125"/>
    </location>
    <ligand>
        <name>UDP-N-acetyl-alpha-D-glucosamine</name>
        <dbReference type="ChEBI" id="CHEBI:57705"/>
    </ligand>
</feature>
<feature type="binding site" evidence="1">
    <location>
        <position position="307"/>
    </location>
    <ligand>
        <name>UDP-N-acetyl-alpha-D-glucosamine</name>
        <dbReference type="ChEBI" id="CHEBI:57705"/>
    </ligand>
</feature>
<feature type="binding site" evidence="1">
    <location>
        <position position="329"/>
    </location>
    <ligand>
        <name>UDP-N-acetyl-alpha-D-glucosamine</name>
        <dbReference type="ChEBI" id="CHEBI:57705"/>
    </ligand>
</feature>
<feature type="modified residue" description="2-(S-cysteinyl)pyruvic acid O-phosphothioketal" evidence="1">
    <location>
        <position position="116"/>
    </location>
</feature>